<reference key="1">
    <citation type="journal article" date="2012" name="Mol. Cell">
        <title>Mcm8 and Mcm9 form a complex that functions in homologous recombination repair induced by DNA interstrand crosslinks.</title>
        <authorList>
            <person name="Nishimura K."/>
            <person name="Ishiai M."/>
            <person name="Horikawa K."/>
            <person name="Fukagawa T."/>
            <person name="Takata M."/>
            <person name="Takisawa H."/>
            <person name="Kanemaki M.T."/>
        </authorList>
    </citation>
    <scope>NUCLEOTIDE SEQUENCE [MRNA]</scope>
    <scope>FUNCTION</scope>
    <scope>IDENTIFICATION IN THE MCM8-MCM9 COMPLEX</scope>
    <scope>SUBCELLULAR LOCATION</scope>
    <scope>MUTAGENESIS OF LYS-360 AND ARG-484</scope>
</reference>
<reference key="2">
    <citation type="journal article" date="2004" name="Nature">
        <title>Sequence and comparative analysis of the chicken genome provide unique perspectives on vertebrate evolution.</title>
        <authorList>
            <person name="Hillier L.W."/>
            <person name="Miller W."/>
            <person name="Birney E."/>
            <person name="Warren W."/>
            <person name="Hardison R.C."/>
            <person name="Ponting C.P."/>
            <person name="Bork P."/>
            <person name="Burt D.W."/>
            <person name="Groenen M.A.M."/>
            <person name="Delany M.E."/>
            <person name="Dodgson J.B."/>
            <person name="Chinwalla A.T."/>
            <person name="Cliften P.F."/>
            <person name="Clifton S.W."/>
            <person name="Delehaunty K.D."/>
            <person name="Fronick C."/>
            <person name="Fulton R.S."/>
            <person name="Graves T.A."/>
            <person name="Kremitzki C."/>
            <person name="Layman D."/>
            <person name="Magrini V."/>
            <person name="McPherson J.D."/>
            <person name="Miner T.L."/>
            <person name="Minx P."/>
            <person name="Nash W.E."/>
            <person name="Nhan M.N."/>
            <person name="Nelson J.O."/>
            <person name="Oddy L.G."/>
            <person name="Pohl C.S."/>
            <person name="Randall-Maher J."/>
            <person name="Smith S.M."/>
            <person name="Wallis J.W."/>
            <person name="Yang S.-P."/>
            <person name="Romanov M.N."/>
            <person name="Rondelli C.M."/>
            <person name="Paton B."/>
            <person name="Smith J."/>
            <person name="Morrice D."/>
            <person name="Daniels L."/>
            <person name="Tempest H.G."/>
            <person name="Robertson L."/>
            <person name="Masabanda J.S."/>
            <person name="Griffin D.K."/>
            <person name="Vignal A."/>
            <person name="Fillon V."/>
            <person name="Jacobbson L."/>
            <person name="Kerje S."/>
            <person name="Andersson L."/>
            <person name="Crooijmans R.P."/>
            <person name="Aerts J."/>
            <person name="van der Poel J.J."/>
            <person name="Ellegren H."/>
            <person name="Caldwell R.B."/>
            <person name="Hubbard S.J."/>
            <person name="Grafham D.V."/>
            <person name="Kierzek A.M."/>
            <person name="McLaren S.R."/>
            <person name="Overton I.M."/>
            <person name="Arakawa H."/>
            <person name="Beattie K.J."/>
            <person name="Bezzubov Y."/>
            <person name="Boardman P.E."/>
            <person name="Bonfield J.K."/>
            <person name="Croning M.D.R."/>
            <person name="Davies R.M."/>
            <person name="Francis M.D."/>
            <person name="Humphray S.J."/>
            <person name="Scott C.E."/>
            <person name="Taylor R.G."/>
            <person name="Tickle C."/>
            <person name="Brown W.R.A."/>
            <person name="Rogers J."/>
            <person name="Buerstedde J.-M."/>
            <person name="Wilson S.A."/>
            <person name="Stubbs L."/>
            <person name="Ovcharenko I."/>
            <person name="Gordon L."/>
            <person name="Lucas S."/>
            <person name="Miller M.M."/>
            <person name="Inoko H."/>
            <person name="Shiina T."/>
            <person name="Kaufman J."/>
            <person name="Salomonsen J."/>
            <person name="Skjoedt K."/>
            <person name="Wong G.K.-S."/>
            <person name="Wang J."/>
            <person name="Liu B."/>
            <person name="Wang J."/>
            <person name="Yu J."/>
            <person name="Yang H."/>
            <person name="Nefedov M."/>
            <person name="Koriabine M."/>
            <person name="Dejong P.J."/>
            <person name="Goodstadt L."/>
            <person name="Webber C."/>
            <person name="Dickens N.J."/>
            <person name="Letunic I."/>
            <person name="Suyama M."/>
            <person name="Torrents D."/>
            <person name="von Mering C."/>
            <person name="Zdobnov E.M."/>
            <person name="Makova K."/>
            <person name="Nekrutenko A."/>
            <person name="Elnitski L."/>
            <person name="Eswara P."/>
            <person name="King D.C."/>
            <person name="Yang S.-P."/>
            <person name="Tyekucheva S."/>
            <person name="Radakrishnan A."/>
            <person name="Harris R.S."/>
            <person name="Chiaromonte F."/>
            <person name="Taylor J."/>
            <person name="He J."/>
            <person name="Rijnkels M."/>
            <person name="Griffiths-Jones S."/>
            <person name="Ureta-Vidal A."/>
            <person name="Hoffman M.M."/>
            <person name="Severin J."/>
            <person name="Searle S.M.J."/>
            <person name="Law A.S."/>
            <person name="Speed D."/>
            <person name="Waddington D."/>
            <person name="Cheng Z."/>
            <person name="Tuzun E."/>
            <person name="Eichler E."/>
            <person name="Bao Z."/>
            <person name="Flicek P."/>
            <person name="Shteynberg D.D."/>
            <person name="Brent M.R."/>
            <person name="Bye J.M."/>
            <person name="Huckle E.J."/>
            <person name="Chatterji S."/>
            <person name="Dewey C."/>
            <person name="Pachter L."/>
            <person name="Kouranov A."/>
            <person name="Mourelatos Z."/>
            <person name="Hatzigeorgiou A.G."/>
            <person name="Paterson A.H."/>
            <person name="Ivarie R."/>
            <person name="Brandstrom M."/>
            <person name="Axelsson E."/>
            <person name="Backstrom N."/>
            <person name="Berlin S."/>
            <person name="Webster M.T."/>
            <person name="Pourquie O."/>
            <person name="Reymond A."/>
            <person name="Ucla C."/>
            <person name="Antonarakis S.E."/>
            <person name="Long M."/>
            <person name="Emerson J.J."/>
            <person name="Betran E."/>
            <person name="Dupanloup I."/>
            <person name="Kaessmann H."/>
            <person name="Hinrichs A.S."/>
            <person name="Bejerano G."/>
            <person name="Furey T.S."/>
            <person name="Harte R.A."/>
            <person name="Raney B."/>
            <person name="Siepel A."/>
            <person name="Kent W.J."/>
            <person name="Haussler D."/>
            <person name="Eyras E."/>
            <person name="Castelo R."/>
            <person name="Abril J.F."/>
            <person name="Castellano S."/>
            <person name="Camara F."/>
            <person name="Parra G."/>
            <person name="Guigo R."/>
            <person name="Bourque G."/>
            <person name="Tesler G."/>
            <person name="Pevzner P.A."/>
            <person name="Smit A."/>
            <person name="Fulton L.A."/>
            <person name="Mardis E.R."/>
            <person name="Wilson R.K."/>
        </authorList>
    </citation>
    <scope>NUCLEOTIDE SEQUENCE [LARGE SCALE GENOMIC DNA]</scope>
    <source>
        <strain>Red jungle fowl</strain>
    </source>
</reference>
<organism>
    <name type="scientific">Gallus gallus</name>
    <name type="common">Chicken</name>
    <dbReference type="NCBI Taxonomy" id="9031"/>
    <lineage>
        <taxon>Eukaryota</taxon>
        <taxon>Metazoa</taxon>
        <taxon>Chordata</taxon>
        <taxon>Craniata</taxon>
        <taxon>Vertebrata</taxon>
        <taxon>Euteleostomi</taxon>
        <taxon>Archelosauria</taxon>
        <taxon>Archosauria</taxon>
        <taxon>Dinosauria</taxon>
        <taxon>Saurischia</taxon>
        <taxon>Theropoda</taxon>
        <taxon>Coelurosauria</taxon>
        <taxon>Aves</taxon>
        <taxon>Neognathae</taxon>
        <taxon>Galloanserae</taxon>
        <taxon>Galliformes</taxon>
        <taxon>Phasianidae</taxon>
        <taxon>Phasianinae</taxon>
        <taxon>Gallus</taxon>
    </lineage>
</organism>
<sequence>MALRADQVSLIGQVFESYLLQHHRDDILGILRQGDDEAHYPVLVDALTLFETNMEIGEYFNAFPSQVLPIFDGALRRAAMAVLQAATPSPELRMKPNLHARISGLPICPELTREHIPKTRDVGHFLSVTGTVIRTSLVKVLEFERSYICNKCKHVFVAKADFEQYYAFCRPSACLNEEGCNSTKFTCLSGTSSSPSSCRDYQEIKIQEQVQRLSVGSIPRCMVVVLEDDLVDSCKSGDDITVYGVVMQRWKPFHQDARCDLELVLKANYVKVNNEQLAGVTIDEEVRKEFEDFWEKHRNNPLAGRNEILASLCPQVFGLYLVKLAVAMVLAGGVQRIDATGTRIRGESHLLLVGDPGTGKSQFLKYAVKITPRSVLTAGIGSTSAGLTVTAVKDFGEWNLEAGALVLADGGLCCIDEFNSIKEHDRTSIHEAMEQQTISVAKAGLVCKLNTRTTILAATNPKGHYDPAESVSVNIALGSPLLSRFDLVLVLLDTKNEEWDRIISSFILQNKGCPSKSEKLWSMEKMKTYFCLIKRIQPKLSDESNLILVRYYQMQRQSDCRNAARTTIRLLESLIRLAEAHARLMFRDTVTLEDAVTVVSVMESSMQGGALLGAINALHTSFPENPMTQYRMQCELILERLELHDLLHKELQRLDRLQKETYCQLQPEETSFSTITGCLNKNTFESKQKSQSEPSDQQKINSYPQPSLPKSNCEGDKHPEALRNPTPGNNISTKRLSRLNKRSDDGSLGWFDRLEDRNTDAEETFWKTSPLPKTSPDNMALKTMSKSSCSEEGNSSVPRKEDGMRGSLRTVTLCAPLEQDKVSEISSKRTEERKCFSSEANIQDPTSASASVQESVITQRVSKSLQRLHTEKSHRFFTSTQNSEANALPSVLPVSGLLDLSSDTDSVVGDENNSASAAVKHAVISMRKRSKGQAEKEAKAVSSHEPEITDGESPPAAKLAKFSFRPRTKLDDSSEKKNAEFPLFPSENTVKPGEQPQGEQLQKDCCPPEKRKMTLTCLGRKGLEKQSIGSKGNEEQLSQALGKEMGGNALIHSDVTLDVVSPPPTEKRREGEEKLGGPSTVRVCSSTLENLSKFCFASRPDSKSEAPPTIKTDTNNKESHSPLLKVHVSNPNKRKSFALGNASKDSVVTRKSLFSIAELDDATLDFDWD</sequence>
<proteinExistence type="evidence at protein level"/>
<feature type="chain" id="PRO_0000419477" description="DNA helicase MCM9">
    <location>
        <begin position="1"/>
        <end position="1169"/>
    </location>
</feature>
<feature type="domain" description="MCM">
    <location>
        <begin position="302"/>
        <end position="507"/>
    </location>
</feature>
<feature type="region of interest" description="Disordered" evidence="2">
    <location>
        <begin position="685"/>
        <end position="751"/>
    </location>
</feature>
<feature type="region of interest" description="Disordered" evidence="2">
    <location>
        <begin position="784"/>
        <end position="804"/>
    </location>
</feature>
<feature type="region of interest" description="Disordered" evidence="2">
    <location>
        <begin position="926"/>
        <end position="1009"/>
    </location>
</feature>
<feature type="region of interest" description="Disordered" evidence="2">
    <location>
        <begin position="1053"/>
        <end position="1080"/>
    </location>
</feature>
<feature type="region of interest" description="Disordered" evidence="2">
    <location>
        <begin position="1098"/>
        <end position="1121"/>
    </location>
</feature>
<feature type="compositionally biased region" description="Polar residues" evidence="2">
    <location>
        <begin position="691"/>
        <end position="710"/>
    </location>
</feature>
<feature type="compositionally biased region" description="Low complexity" evidence="2">
    <location>
        <begin position="785"/>
        <end position="796"/>
    </location>
</feature>
<feature type="compositionally biased region" description="Basic and acidic residues" evidence="2">
    <location>
        <begin position="932"/>
        <end position="947"/>
    </location>
</feature>
<feature type="compositionally biased region" description="Basic and acidic residues" evidence="2">
    <location>
        <begin position="968"/>
        <end position="979"/>
    </location>
</feature>
<feature type="compositionally biased region" description="Basic and acidic residues" evidence="2">
    <location>
        <begin position="1065"/>
        <end position="1075"/>
    </location>
</feature>
<feature type="binding site" evidence="1">
    <location>
        <begin position="354"/>
        <end position="361"/>
    </location>
    <ligand>
        <name>ATP</name>
        <dbReference type="ChEBI" id="CHEBI:30616"/>
    </ligand>
</feature>
<feature type="mutagenesis site" description="Loss of function; when associated with A-484." evidence="3">
    <original>K</original>
    <variation>A</variation>
    <location>
        <position position="360"/>
    </location>
</feature>
<feature type="mutagenesis site" description="Loss of function; when associated with A-360." evidence="3">
    <original>R</original>
    <variation>A</variation>
    <location>
        <position position="484"/>
    </location>
</feature>
<feature type="sequence conflict" description="In Ref. 1; BAM08993." evidence="4" ref="1">
    <original>S</original>
    <variation>T</variation>
    <location>
        <position position="196"/>
    </location>
</feature>
<feature type="sequence conflict" description="In Ref. 1; BAM08993." evidence="4" ref="1">
    <original>I</original>
    <variation>T</variation>
    <location>
        <position position="675"/>
    </location>
</feature>
<feature type="sequence conflict" description="In Ref. 1; BAM08993." evidence="4" ref="1">
    <original>K</original>
    <variation>Q</variation>
    <location>
        <position position="689"/>
    </location>
</feature>
<feature type="sequence conflict" description="In Ref. 1; BAM08993." evidence="4" ref="1">
    <original>L</original>
    <variation>Q</variation>
    <location>
        <position position="1050"/>
    </location>
</feature>
<feature type="sequence conflict" description="In Ref. 1; BAM08993." evidence="4" ref="1">
    <original>P</original>
    <variation>H</variation>
    <location>
        <position position="1064"/>
    </location>
</feature>
<protein>
    <recommendedName>
        <fullName>DNA helicase MCM9</fullName>
        <ecNumber>3.6.4.12</ecNumber>
    </recommendedName>
    <alternativeName>
        <fullName>Minichromosome maintenance 9</fullName>
    </alternativeName>
</protein>
<evidence type="ECO:0000255" key="1"/>
<evidence type="ECO:0000256" key="2">
    <source>
        <dbReference type="SAM" id="MobiDB-lite"/>
    </source>
</evidence>
<evidence type="ECO:0000269" key="3">
    <source>
    </source>
</evidence>
<evidence type="ECO:0000305" key="4"/>
<name>MCM9_CHICK</name>
<gene>
    <name type="primary">MCM9</name>
</gene>
<accession>I0IUP4</accession>
<accession>F1N960</accession>
<comment type="function">
    <text evidence="3">Component of the MCM8-MCM9 complex, a complex involved in homologous recombination repair following DNA interstrand cross-links and plays a key role during gametogenesis. The MCM8-MCM9 complex probably acts as a hexameric helicase required to process aberrant forks into homologous recombination substrates and to orchestrate homologous recombination with resection, fork stabilization and fork restart.</text>
</comment>
<comment type="catalytic activity">
    <reaction>
        <text>ATP + H2O = ADP + phosphate + H(+)</text>
        <dbReference type="Rhea" id="RHEA:13065"/>
        <dbReference type="ChEBI" id="CHEBI:15377"/>
        <dbReference type="ChEBI" id="CHEBI:15378"/>
        <dbReference type="ChEBI" id="CHEBI:30616"/>
        <dbReference type="ChEBI" id="CHEBI:43474"/>
        <dbReference type="ChEBI" id="CHEBI:456216"/>
        <dbReference type="EC" id="3.6.4.12"/>
    </reaction>
</comment>
<comment type="subunit">
    <text evidence="3">Component of the MCM8-MCM9 complex, which forms a hexamer composed of MCM8 and MCM9.</text>
</comment>
<comment type="subcellular location">
    <subcellularLocation>
        <location evidence="3">Nucleus</location>
    </subcellularLocation>
    <text>Localizes to nuclear foci and colocalizes with RAD51.</text>
</comment>
<comment type="similarity">
    <text evidence="4">Belongs to the MCM family.</text>
</comment>
<keyword id="KW-0002">3D-structure</keyword>
<keyword id="KW-0067">ATP-binding</keyword>
<keyword id="KW-0227">DNA damage</keyword>
<keyword id="KW-0234">DNA repair</keyword>
<keyword id="KW-0238">DNA-binding</keyword>
<keyword id="KW-0347">Helicase</keyword>
<keyword id="KW-0378">Hydrolase</keyword>
<keyword id="KW-0547">Nucleotide-binding</keyword>
<keyword id="KW-0539">Nucleus</keyword>
<keyword id="KW-1185">Reference proteome</keyword>
<dbReference type="EC" id="3.6.4.12"/>
<dbReference type="EMBL" id="AB689141">
    <property type="protein sequence ID" value="BAM08993.1"/>
    <property type="molecule type" value="mRNA"/>
</dbReference>
<dbReference type="EMBL" id="AADN02001969">
    <property type="status" value="NOT_ANNOTATED_CDS"/>
    <property type="molecule type" value="Genomic_DNA"/>
</dbReference>
<dbReference type="EMBL" id="AADN02001970">
    <property type="status" value="NOT_ANNOTATED_CDS"/>
    <property type="molecule type" value="Genomic_DNA"/>
</dbReference>
<dbReference type="RefSeq" id="NP_001292018.1">
    <property type="nucleotide sequence ID" value="NM_001305089.1"/>
</dbReference>
<dbReference type="PDB" id="7W7P">
    <property type="method" value="EM"/>
    <property type="resolution" value="3.67 A"/>
    <property type="chains" value="A/C/E=1-273"/>
</dbReference>
<dbReference type="PDBsum" id="7W7P"/>
<dbReference type="EMDB" id="EMD-32346"/>
<dbReference type="SMR" id="I0IUP4"/>
<dbReference type="FunCoup" id="I0IUP4">
    <property type="interactions" value="1503"/>
</dbReference>
<dbReference type="STRING" id="9031.ENSGALP00000023968"/>
<dbReference type="PaxDb" id="9031-ENSGALP00000023968"/>
<dbReference type="KEGG" id="gga:100857742"/>
<dbReference type="VEuPathDB" id="HostDB:geneid_100857742"/>
<dbReference type="eggNOG" id="KOG0477">
    <property type="taxonomic scope" value="Eukaryota"/>
</dbReference>
<dbReference type="InParanoid" id="I0IUP4"/>
<dbReference type="OrthoDB" id="271325at2759"/>
<dbReference type="PRO" id="PR:I0IUP4"/>
<dbReference type="Proteomes" id="UP000000539">
    <property type="component" value="Unassembled WGS sequence"/>
</dbReference>
<dbReference type="GO" id="GO:0042555">
    <property type="term" value="C:MCM complex"/>
    <property type="evidence" value="ECO:0000318"/>
    <property type="project" value="GO_Central"/>
</dbReference>
<dbReference type="GO" id="GO:0097362">
    <property type="term" value="C:MCM8-MCM9 complex"/>
    <property type="evidence" value="ECO:0000314"/>
    <property type="project" value="UniProtKB"/>
</dbReference>
<dbReference type="GO" id="GO:0005634">
    <property type="term" value="C:nucleus"/>
    <property type="evidence" value="ECO:0000314"/>
    <property type="project" value="UniProtKB"/>
</dbReference>
<dbReference type="GO" id="GO:0005524">
    <property type="term" value="F:ATP binding"/>
    <property type="evidence" value="ECO:0007669"/>
    <property type="project" value="UniProtKB-KW"/>
</dbReference>
<dbReference type="GO" id="GO:0016887">
    <property type="term" value="F:ATP hydrolysis activity"/>
    <property type="evidence" value="ECO:0007669"/>
    <property type="project" value="InterPro"/>
</dbReference>
<dbReference type="GO" id="GO:0004386">
    <property type="term" value="F:helicase activity"/>
    <property type="evidence" value="ECO:0007669"/>
    <property type="project" value="UniProtKB-KW"/>
</dbReference>
<dbReference type="GO" id="GO:0003697">
    <property type="term" value="F:single-stranded DNA binding"/>
    <property type="evidence" value="ECO:0000318"/>
    <property type="project" value="GO_Central"/>
</dbReference>
<dbReference type="GO" id="GO:0006974">
    <property type="term" value="P:DNA damage response"/>
    <property type="evidence" value="ECO:0000314"/>
    <property type="project" value="UniProtKB"/>
</dbReference>
<dbReference type="GO" id="GO:0000724">
    <property type="term" value="P:double-strand break repair via homologous recombination"/>
    <property type="evidence" value="ECO:0000314"/>
    <property type="project" value="UniProtKB"/>
</dbReference>
<dbReference type="CDD" id="cd17760">
    <property type="entry name" value="MCM9"/>
    <property type="match status" value="1"/>
</dbReference>
<dbReference type="FunFam" id="3.40.50.300:FF:000671">
    <property type="entry name" value="DNA helicase MCM9 isoform X1"/>
    <property type="match status" value="1"/>
</dbReference>
<dbReference type="FunFam" id="2.40.50.140:FF:000120">
    <property type="entry name" value="Probable DNA helicase MCM9"/>
    <property type="match status" value="1"/>
</dbReference>
<dbReference type="Gene3D" id="2.40.50.140">
    <property type="entry name" value="Nucleic acid-binding proteins"/>
    <property type="match status" value="1"/>
</dbReference>
<dbReference type="Gene3D" id="3.40.50.300">
    <property type="entry name" value="P-loop containing nucleotide triphosphate hydrolases"/>
    <property type="match status" value="1"/>
</dbReference>
<dbReference type="InterPro" id="IPR003593">
    <property type="entry name" value="AAA+_ATPase"/>
</dbReference>
<dbReference type="InterPro" id="IPR031327">
    <property type="entry name" value="MCM"/>
</dbReference>
<dbReference type="InterPro" id="IPR001208">
    <property type="entry name" value="MCM_dom"/>
</dbReference>
<dbReference type="InterPro" id="IPR041562">
    <property type="entry name" value="MCM_lid"/>
</dbReference>
<dbReference type="InterPro" id="IPR033762">
    <property type="entry name" value="MCM_OB"/>
</dbReference>
<dbReference type="InterPro" id="IPR012340">
    <property type="entry name" value="NA-bd_OB-fold"/>
</dbReference>
<dbReference type="InterPro" id="IPR027417">
    <property type="entry name" value="P-loop_NTPase"/>
</dbReference>
<dbReference type="PANTHER" id="PTHR11630:SF48">
    <property type="entry name" value="DNA HELICASE MCM9"/>
    <property type="match status" value="1"/>
</dbReference>
<dbReference type="PANTHER" id="PTHR11630">
    <property type="entry name" value="DNA REPLICATION LICENSING FACTOR MCM FAMILY MEMBER"/>
    <property type="match status" value="1"/>
</dbReference>
<dbReference type="Pfam" id="PF00493">
    <property type="entry name" value="MCM"/>
    <property type="match status" value="1"/>
</dbReference>
<dbReference type="Pfam" id="PF17855">
    <property type="entry name" value="MCM_lid"/>
    <property type="match status" value="1"/>
</dbReference>
<dbReference type="Pfam" id="PF17207">
    <property type="entry name" value="MCM_OB"/>
    <property type="match status" value="1"/>
</dbReference>
<dbReference type="PRINTS" id="PR01657">
    <property type="entry name" value="MCMFAMILY"/>
</dbReference>
<dbReference type="SMART" id="SM00382">
    <property type="entry name" value="AAA"/>
    <property type="match status" value="1"/>
</dbReference>
<dbReference type="SMART" id="SM00350">
    <property type="entry name" value="MCM"/>
    <property type="match status" value="1"/>
</dbReference>
<dbReference type="SUPFAM" id="SSF50249">
    <property type="entry name" value="Nucleic acid-binding proteins"/>
    <property type="match status" value="1"/>
</dbReference>
<dbReference type="SUPFAM" id="SSF52540">
    <property type="entry name" value="P-loop containing nucleoside triphosphate hydrolases"/>
    <property type="match status" value="1"/>
</dbReference>
<dbReference type="PROSITE" id="PS50051">
    <property type="entry name" value="MCM_2"/>
    <property type="match status" value="1"/>
</dbReference>